<sequence>SESYTPISGPNGYXVDVK</sequence>
<accession>P33888</accession>
<reference key="1">
    <citation type="journal article" date="1993" name="Biochim. Biophys. Acta">
        <title>Purification and partial characterization of a mitogenic lectin from the latex of Euphorbia marginata.</title>
        <authorList>
            <person name="Stirpe F."/>
            <person name="Licastro F."/>
            <person name="Morini M.C."/>
            <person name="Parente A."/>
            <person name="Savino G."/>
            <person name="Abbondanza A."/>
            <person name="Bolognesi A."/>
            <person name="Falasca A.I."/>
            <person name="Rossi C.A."/>
        </authorList>
    </citation>
    <scope>PROTEIN SEQUENCE</scope>
    <source>
        <tissue>Latex</tissue>
    </source>
</reference>
<proteinExistence type="evidence at protein level"/>
<feature type="chain" id="PRO_0000221395" description="Lectin">
    <location>
        <begin position="1"/>
        <end position="18" status="greater than"/>
    </location>
</feature>
<feature type="non-terminal residue">
    <location>
        <position position="18"/>
    </location>
</feature>
<organism>
    <name type="scientific">Euphorbia characias</name>
    <name type="common">Albanian spurge</name>
    <dbReference type="NCBI Taxonomy" id="3991"/>
    <lineage>
        <taxon>Eukaryota</taxon>
        <taxon>Viridiplantae</taxon>
        <taxon>Streptophyta</taxon>
        <taxon>Embryophyta</taxon>
        <taxon>Tracheophyta</taxon>
        <taxon>Spermatophyta</taxon>
        <taxon>Magnoliopsida</taxon>
        <taxon>eudicotyledons</taxon>
        <taxon>Gunneridae</taxon>
        <taxon>Pentapetalae</taxon>
        <taxon>rosids</taxon>
        <taxon>fabids</taxon>
        <taxon>Malpighiales</taxon>
        <taxon>Euphorbiaceae</taxon>
        <taxon>Euphorbioideae</taxon>
        <taxon>Euphorbieae</taxon>
        <taxon>Euphorbia</taxon>
        <taxon>Euphorbia subgen. Esula</taxon>
        <taxon>Euphorbia sect. Patellares</taxon>
    </lineage>
</organism>
<dbReference type="PIR" id="S36121">
    <property type="entry name" value="S36121"/>
</dbReference>
<dbReference type="GO" id="GO:0030246">
    <property type="term" value="F:carbohydrate binding"/>
    <property type="evidence" value="ECO:0007669"/>
    <property type="project" value="UniProtKB-KW"/>
</dbReference>
<comment type="function">
    <text>Lectin that binds galactose, galactose-containing sugars and gentiobiose. It is strongly mitogenic for human T-lymphocytes.</text>
</comment>
<comment type="subunit">
    <text>Homodimer.</text>
</comment>
<comment type="PTM">
    <text>N-glycosylated.</text>
</comment>
<keyword id="KW-0903">Direct protein sequencing</keyword>
<keyword id="KW-0430">Lectin</keyword>
<name>AGI_EUPCH</name>
<protein>
    <recommendedName>
        <fullName>Lectin</fullName>
    </recommendedName>
</protein>